<dbReference type="EMBL" id="AE005174">
    <property type="protein sequence ID" value="AAG58656.1"/>
    <property type="molecule type" value="Genomic_DNA"/>
</dbReference>
<dbReference type="EMBL" id="BA000007">
    <property type="protein sequence ID" value="BAB37818.1"/>
    <property type="molecule type" value="Genomic_DNA"/>
</dbReference>
<dbReference type="PIR" id="C91178">
    <property type="entry name" value="C91178"/>
</dbReference>
<dbReference type="PIR" id="D86024">
    <property type="entry name" value="D86024"/>
</dbReference>
<dbReference type="RefSeq" id="NP_312422.1">
    <property type="nucleotide sequence ID" value="NC_002695.1"/>
</dbReference>
<dbReference type="RefSeq" id="WP_000149999.1">
    <property type="nucleotide sequence ID" value="NZ_VOAI01000004.1"/>
</dbReference>
<dbReference type="STRING" id="155864.Z4928"/>
<dbReference type="GeneID" id="915748"/>
<dbReference type="KEGG" id="ece:Z4928"/>
<dbReference type="KEGG" id="ecs:ECs_4395"/>
<dbReference type="PATRIC" id="fig|386585.9.peg.4593"/>
<dbReference type="eggNOG" id="COG2207">
    <property type="taxonomic scope" value="Bacteria"/>
</dbReference>
<dbReference type="HOGENOM" id="CLU_000445_81_4_6"/>
<dbReference type="OMA" id="FRIPHNC"/>
<dbReference type="Proteomes" id="UP000000558">
    <property type="component" value="Chromosome"/>
</dbReference>
<dbReference type="Proteomes" id="UP000002519">
    <property type="component" value="Chromosome"/>
</dbReference>
<dbReference type="GO" id="GO:0005829">
    <property type="term" value="C:cytosol"/>
    <property type="evidence" value="ECO:0007669"/>
    <property type="project" value="TreeGrafter"/>
</dbReference>
<dbReference type="GO" id="GO:0003700">
    <property type="term" value="F:DNA-binding transcription factor activity"/>
    <property type="evidence" value="ECO:0007669"/>
    <property type="project" value="InterPro"/>
</dbReference>
<dbReference type="GO" id="GO:0000976">
    <property type="term" value="F:transcription cis-regulatory region binding"/>
    <property type="evidence" value="ECO:0007669"/>
    <property type="project" value="TreeGrafter"/>
</dbReference>
<dbReference type="FunFam" id="1.10.10.60:FF:000278">
    <property type="entry name" value="HTH-type transcriptional regulator GadW"/>
    <property type="match status" value="1"/>
</dbReference>
<dbReference type="Gene3D" id="1.10.10.60">
    <property type="entry name" value="Homeodomain-like"/>
    <property type="match status" value="1"/>
</dbReference>
<dbReference type="InterPro" id="IPR009057">
    <property type="entry name" value="Homeodomain-like_sf"/>
</dbReference>
<dbReference type="InterPro" id="IPR018060">
    <property type="entry name" value="HTH_AraC"/>
</dbReference>
<dbReference type="InterPro" id="IPR018062">
    <property type="entry name" value="HTH_AraC-typ_CS"/>
</dbReference>
<dbReference type="InterPro" id="IPR020449">
    <property type="entry name" value="Tscrpt_reg_AraC-type_HTH"/>
</dbReference>
<dbReference type="PANTHER" id="PTHR47894">
    <property type="entry name" value="HTH-TYPE TRANSCRIPTIONAL REGULATOR GADX"/>
    <property type="match status" value="1"/>
</dbReference>
<dbReference type="PANTHER" id="PTHR47894:SF4">
    <property type="entry name" value="HTH-TYPE TRANSCRIPTIONAL REGULATOR GADX"/>
    <property type="match status" value="1"/>
</dbReference>
<dbReference type="Pfam" id="PF12833">
    <property type="entry name" value="HTH_18"/>
    <property type="match status" value="1"/>
</dbReference>
<dbReference type="PRINTS" id="PR00032">
    <property type="entry name" value="HTHARAC"/>
</dbReference>
<dbReference type="SMART" id="SM00342">
    <property type="entry name" value="HTH_ARAC"/>
    <property type="match status" value="1"/>
</dbReference>
<dbReference type="SUPFAM" id="SSF46689">
    <property type="entry name" value="Homeodomain-like"/>
    <property type="match status" value="1"/>
</dbReference>
<dbReference type="PROSITE" id="PS00041">
    <property type="entry name" value="HTH_ARAC_FAMILY_1"/>
    <property type="match status" value="1"/>
</dbReference>
<dbReference type="PROSITE" id="PS01124">
    <property type="entry name" value="HTH_ARAC_FAMILY_2"/>
    <property type="match status" value="1"/>
</dbReference>
<accession>P63202</accession>
<accession>P37638</accession>
<keyword id="KW-0010">Activator</keyword>
<keyword id="KW-0238">DNA-binding</keyword>
<keyword id="KW-1185">Reference proteome</keyword>
<keyword id="KW-0678">Repressor</keyword>
<keyword id="KW-0804">Transcription</keyword>
<keyword id="KW-0805">Transcription regulation</keyword>
<evidence type="ECO:0000250" key="1"/>
<evidence type="ECO:0000255" key="2">
    <source>
        <dbReference type="PROSITE-ProRule" id="PRU00593"/>
    </source>
</evidence>
<proteinExistence type="inferred from homology"/>
<comment type="function">
    <text evidence="1">Depending on the conditions (growth phase and medium), acts as a positive or negative regulator of gadA and gadBC. Repression occurs directly or via the repression of the expression of gadX. Activation occurs directly by the binding of GadW to the gadA and gadBC promoters (By similarity).</text>
</comment>
<comment type="subunit">
    <text evidence="1">Homodimer.</text>
</comment>
<comment type="induction">
    <text evidence="1">Expression can be repressed by GadX, depending on the conditions.</text>
</comment>
<name>GADW_ECO57</name>
<feature type="chain" id="PRO_0000194516" description="HTH-type transcriptional regulator GadW">
    <location>
        <begin position="1"/>
        <end position="242"/>
    </location>
</feature>
<feature type="domain" description="HTH araC/xylS-type" evidence="2">
    <location>
        <begin position="139"/>
        <end position="236"/>
    </location>
</feature>
<feature type="DNA-binding region" description="H-T-H motif" evidence="2">
    <location>
        <begin position="156"/>
        <end position="177"/>
    </location>
</feature>
<feature type="DNA-binding region" description="H-T-H motif" evidence="2">
    <location>
        <begin position="203"/>
        <end position="226"/>
    </location>
</feature>
<sequence>MTHVCSVILIRRSFDIYHEQQKISLHNESILLLEKNLADDFAFCSPDTRRLDIDELTVCHYLQNIRQLPRNLGLHSKDRLLINQSPPMPLVTAIFDSFNESGVNSPILSNMLYLSCLSMFSHKKELIPLLFNSISTVSGKVERLISFDIAKRWYLRDIAERMYTSESLIKKKLQDENTCFSKILLASRMSMARRLLELRQIPLHTIAEKCGYSSTSYFINTFRQYYGVTPHQFAQHSPGTFS</sequence>
<organism>
    <name type="scientific">Escherichia coli O157:H7</name>
    <dbReference type="NCBI Taxonomy" id="83334"/>
    <lineage>
        <taxon>Bacteria</taxon>
        <taxon>Pseudomonadati</taxon>
        <taxon>Pseudomonadota</taxon>
        <taxon>Gammaproteobacteria</taxon>
        <taxon>Enterobacterales</taxon>
        <taxon>Enterobacteriaceae</taxon>
        <taxon>Escherichia</taxon>
    </lineage>
</organism>
<gene>
    <name type="primary">gadW</name>
    <name type="ordered locus">Z4928</name>
    <name type="ordered locus">ECs4395</name>
</gene>
<protein>
    <recommendedName>
        <fullName>HTH-type transcriptional regulator GadW</fullName>
    </recommendedName>
</protein>
<reference key="1">
    <citation type="journal article" date="2001" name="Nature">
        <title>Genome sequence of enterohaemorrhagic Escherichia coli O157:H7.</title>
        <authorList>
            <person name="Perna N.T."/>
            <person name="Plunkett G. III"/>
            <person name="Burland V."/>
            <person name="Mau B."/>
            <person name="Glasner J.D."/>
            <person name="Rose D.J."/>
            <person name="Mayhew G.F."/>
            <person name="Evans P.S."/>
            <person name="Gregor J."/>
            <person name="Kirkpatrick H.A."/>
            <person name="Posfai G."/>
            <person name="Hackett J."/>
            <person name="Klink S."/>
            <person name="Boutin A."/>
            <person name="Shao Y."/>
            <person name="Miller L."/>
            <person name="Grotbeck E.J."/>
            <person name="Davis N.W."/>
            <person name="Lim A."/>
            <person name="Dimalanta E.T."/>
            <person name="Potamousis K."/>
            <person name="Apodaca J."/>
            <person name="Anantharaman T.S."/>
            <person name="Lin J."/>
            <person name="Yen G."/>
            <person name="Schwartz D.C."/>
            <person name="Welch R.A."/>
            <person name="Blattner F.R."/>
        </authorList>
    </citation>
    <scope>NUCLEOTIDE SEQUENCE [LARGE SCALE GENOMIC DNA]</scope>
    <source>
        <strain>O157:H7 / EDL933 / ATCC 700927 / EHEC</strain>
    </source>
</reference>
<reference key="2">
    <citation type="journal article" date="2001" name="DNA Res.">
        <title>Complete genome sequence of enterohemorrhagic Escherichia coli O157:H7 and genomic comparison with a laboratory strain K-12.</title>
        <authorList>
            <person name="Hayashi T."/>
            <person name="Makino K."/>
            <person name="Ohnishi M."/>
            <person name="Kurokawa K."/>
            <person name="Ishii K."/>
            <person name="Yokoyama K."/>
            <person name="Han C.-G."/>
            <person name="Ohtsubo E."/>
            <person name="Nakayama K."/>
            <person name="Murata T."/>
            <person name="Tanaka M."/>
            <person name="Tobe T."/>
            <person name="Iida T."/>
            <person name="Takami H."/>
            <person name="Honda T."/>
            <person name="Sasakawa C."/>
            <person name="Ogasawara N."/>
            <person name="Yasunaga T."/>
            <person name="Kuhara S."/>
            <person name="Shiba T."/>
            <person name="Hattori M."/>
            <person name="Shinagawa H."/>
        </authorList>
    </citation>
    <scope>NUCLEOTIDE SEQUENCE [LARGE SCALE GENOMIC DNA]</scope>
    <source>
        <strain>O157:H7 / Sakai / RIMD 0509952 / EHEC</strain>
    </source>
</reference>